<name>ENO_BARQU</name>
<evidence type="ECO:0000255" key="1">
    <source>
        <dbReference type="HAMAP-Rule" id="MF_00318"/>
    </source>
</evidence>
<reference key="1">
    <citation type="journal article" date="2004" name="Proc. Natl. Acad. Sci. U.S.A.">
        <title>The louse-borne human pathogen Bartonella quintana is a genomic derivative of the zoonotic agent Bartonella henselae.</title>
        <authorList>
            <person name="Alsmark U.C.M."/>
            <person name="Frank A.C."/>
            <person name="Karlberg E.O."/>
            <person name="Legault B.-A."/>
            <person name="Ardell D.H."/>
            <person name="Canbaeck B."/>
            <person name="Eriksson A.-S."/>
            <person name="Naeslund A.K."/>
            <person name="Handley S.A."/>
            <person name="Huvet M."/>
            <person name="La Scola B."/>
            <person name="Holmberg M."/>
            <person name="Andersson S.G.E."/>
        </authorList>
    </citation>
    <scope>NUCLEOTIDE SEQUENCE [LARGE SCALE GENOMIC DNA]</scope>
    <source>
        <strain>Toulouse</strain>
    </source>
</reference>
<protein>
    <recommendedName>
        <fullName evidence="1">Enolase</fullName>
        <ecNumber evidence="1">4.2.1.11</ecNumber>
    </recommendedName>
    <alternativeName>
        <fullName evidence="1">2-phospho-D-glycerate hydro-lyase</fullName>
    </alternativeName>
    <alternativeName>
        <fullName evidence="1">2-phosphoglycerate dehydratase</fullName>
    </alternativeName>
</protein>
<feature type="chain" id="PRO_0000133844" description="Enolase">
    <location>
        <begin position="1"/>
        <end position="422"/>
    </location>
</feature>
<feature type="active site" description="Proton donor" evidence="1">
    <location>
        <position position="204"/>
    </location>
</feature>
<feature type="active site" description="Proton acceptor" evidence="1">
    <location>
        <position position="336"/>
    </location>
</feature>
<feature type="binding site" evidence="1">
    <location>
        <position position="162"/>
    </location>
    <ligand>
        <name>(2R)-2-phosphoglycerate</name>
        <dbReference type="ChEBI" id="CHEBI:58289"/>
    </ligand>
</feature>
<feature type="binding site" evidence="1">
    <location>
        <position position="241"/>
    </location>
    <ligand>
        <name>Mg(2+)</name>
        <dbReference type="ChEBI" id="CHEBI:18420"/>
    </ligand>
</feature>
<feature type="binding site" evidence="1">
    <location>
        <position position="284"/>
    </location>
    <ligand>
        <name>Mg(2+)</name>
        <dbReference type="ChEBI" id="CHEBI:18420"/>
    </ligand>
</feature>
<feature type="binding site" evidence="1">
    <location>
        <position position="311"/>
    </location>
    <ligand>
        <name>Mg(2+)</name>
        <dbReference type="ChEBI" id="CHEBI:18420"/>
    </ligand>
</feature>
<feature type="binding site" evidence="1">
    <location>
        <position position="336"/>
    </location>
    <ligand>
        <name>(2R)-2-phosphoglycerate</name>
        <dbReference type="ChEBI" id="CHEBI:58289"/>
    </ligand>
</feature>
<feature type="binding site" evidence="1">
    <location>
        <position position="365"/>
    </location>
    <ligand>
        <name>(2R)-2-phosphoglycerate</name>
        <dbReference type="ChEBI" id="CHEBI:58289"/>
    </ligand>
</feature>
<feature type="binding site" evidence="1">
    <location>
        <position position="366"/>
    </location>
    <ligand>
        <name>(2R)-2-phosphoglycerate</name>
        <dbReference type="ChEBI" id="CHEBI:58289"/>
    </ligand>
</feature>
<feature type="binding site" evidence="1">
    <location>
        <position position="387"/>
    </location>
    <ligand>
        <name>(2R)-2-phosphoglycerate</name>
        <dbReference type="ChEBI" id="CHEBI:58289"/>
    </ligand>
</feature>
<dbReference type="EC" id="4.2.1.11" evidence="1"/>
<dbReference type="EMBL" id="BX897700">
    <property type="protein sequence ID" value="CAF25987.1"/>
    <property type="molecule type" value="Genomic_DNA"/>
</dbReference>
<dbReference type="RefSeq" id="WP_011179273.1">
    <property type="nucleotide sequence ID" value="NC_005955.1"/>
</dbReference>
<dbReference type="SMR" id="Q6G173"/>
<dbReference type="KEGG" id="bqu:BQ04880"/>
<dbReference type="eggNOG" id="COG0148">
    <property type="taxonomic scope" value="Bacteria"/>
</dbReference>
<dbReference type="HOGENOM" id="CLU_031223_2_1_5"/>
<dbReference type="OrthoDB" id="9804716at2"/>
<dbReference type="UniPathway" id="UPA00109">
    <property type="reaction ID" value="UER00187"/>
</dbReference>
<dbReference type="Proteomes" id="UP000000597">
    <property type="component" value="Chromosome"/>
</dbReference>
<dbReference type="GO" id="GO:0009986">
    <property type="term" value="C:cell surface"/>
    <property type="evidence" value="ECO:0007669"/>
    <property type="project" value="UniProtKB-SubCell"/>
</dbReference>
<dbReference type="GO" id="GO:0005576">
    <property type="term" value="C:extracellular region"/>
    <property type="evidence" value="ECO:0007669"/>
    <property type="project" value="UniProtKB-SubCell"/>
</dbReference>
<dbReference type="GO" id="GO:0000015">
    <property type="term" value="C:phosphopyruvate hydratase complex"/>
    <property type="evidence" value="ECO:0007669"/>
    <property type="project" value="InterPro"/>
</dbReference>
<dbReference type="GO" id="GO:0000287">
    <property type="term" value="F:magnesium ion binding"/>
    <property type="evidence" value="ECO:0007669"/>
    <property type="project" value="UniProtKB-UniRule"/>
</dbReference>
<dbReference type="GO" id="GO:0004634">
    <property type="term" value="F:phosphopyruvate hydratase activity"/>
    <property type="evidence" value="ECO:0007669"/>
    <property type="project" value="UniProtKB-UniRule"/>
</dbReference>
<dbReference type="GO" id="GO:0006096">
    <property type="term" value="P:glycolytic process"/>
    <property type="evidence" value="ECO:0007669"/>
    <property type="project" value="UniProtKB-UniRule"/>
</dbReference>
<dbReference type="CDD" id="cd03313">
    <property type="entry name" value="enolase"/>
    <property type="match status" value="1"/>
</dbReference>
<dbReference type="FunFam" id="3.20.20.120:FF:000001">
    <property type="entry name" value="Enolase"/>
    <property type="match status" value="1"/>
</dbReference>
<dbReference type="FunFam" id="3.30.390.10:FF:000001">
    <property type="entry name" value="Enolase"/>
    <property type="match status" value="1"/>
</dbReference>
<dbReference type="Gene3D" id="3.20.20.120">
    <property type="entry name" value="Enolase-like C-terminal domain"/>
    <property type="match status" value="1"/>
</dbReference>
<dbReference type="Gene3D" id="3.30.390.10">
    <property type="entry name" value="Enolase-like, N-terminal domain"/>
    <property type="match status" value="1"/>
</dbReference>
<dbReference type="HAMAP" id="MF_00318">
    <property type="entry name" value="Enolase"/>
    <property type="match status" value="1"/>
</dbReference>
<dbReference type="InterPro" id="IPR000941">
    <property type="entry name" value="Enolase"/>
</dbReference>
<dbReference type="InterPro" id="IPR036849">
    <property type="entry name" value="Enolase-like_C_sf"/>
</dbReference>
<dbReference type="InterPro" id="IPR029017">
    <property type="entry name" value="Enolase-like_N"/>
</dbReference>
<dbReference type="InterPro" id="IPR020810">
    <property type="entry name" value="Enolase_C"/>
</dbReference>
<dbReference type="InterPro" id="IPR020809">
    <property type="entry name" value="Enolase_CS"/>
</dbReference>
<dbReference type="InterPro" id="IPR020811">
    <property type="entry name" value="Enolase_N"/>
</dbReference>
<dbReference type="NCBIfam" id="TIGR01060">
    <property type="entry name" value="eno"/>
    <property type="match status" value="1"/>
</dbReference>
<dbReference type="PANTHER" id="PTHR11902">
    <property type="entry name" value="ENOLASE"/>
    <property type="match status" value="1"/>
</dbReference>
<dbReference type="PANTHER" id="PTHR11902:SF1">
    <property type="entry name" value="ENOLASE"/>
    <property type="match status" value="1"/>
</dbReference>
<dbReference type="Pfam" id="PF00113">
    <property type="entry name" value="Enolase_C"/>
    <property type="match status" value="1"/>
</dbReference>
<dbReference type="Pfam" id="PF03952">
    <property type="entry name" value="Enolase_N"/>
    <property type="match status" value="1"/>
</dbReference>
<dbReference type="PIRSF" id="PIRSF001400">
    <property type="entry name" value="Enolase"/>
    <property type="match status" value="1"/>
</dbReference>
<dbReference type="PRINTS" id="PR00148">
    <property type="entry name" value="ENOLASE"/>
</dbReference>
<dbReference type="SFLD" id="SFLDS00001">
    <property type="entry name" value="Enolase"/>
    <property type="match status" value="1"/>
</dbReference>
<dbReference type="SFLD" id="SFLDF00002">
    <property type="entry name" value="enolase"/>
    <property type="match status" value="1"/>
</dbReference>
<dbReference type="SMART" id="SM01192">
    <property type="entry name" value="Enolase_C"/>
    <property type="match status" value="1"/>
</dbReference>
<dbReference type="SMART" id="SM01193">
    <property type="entry name" value="Enolase_N"/>
    <property type="match status" value="1"/>
</dbReference>
<dbReference type="SUPFAM" id="SSF51604">
    <property type="entry name" value="Enolase C-terminal domain-like"/>
    <property type="match status" value="1"/>
</dbReference>
<dbReference type="SUPFAM" id="SSF54826">
    <property type="entry name" value="Enolase N-terminal domain-like"/>
    <property type="match status" value="1"/>
</dbReference>
<dbReference type="PROSITE" id="PS00164">
    <property type="entry name" value="ENOLASE"/>
    <property type="match status" value="1"/>
</dbReference>
<sequence length="422" mass="45660">MTIIVDIIGREILDSRGNPTVEVDVHLENGIVGRAFVPSGASKGAHEAVELRDGGIRYQGKGVERAVAAVNGEILEELVGRDARNQIAIDQAMIALDGTPNKARLGANAILGVSLAVAKAAAESLCLPLYRYIGGTQAHVLPTPMMNIINGGVHADNSIDFQEFMIIPVGASTLKEAVRYGAEIFHMLKKRLKDAGHNTNVGDEGGFAPQFKSAEQAIDFIMESIITCGYKPGEQIALGLDCASTEFYKNGSYFYKGEGKCRNTQEQVDYLAQLVKTYPIITIEDGMAEDDWEGWKLLTDSIGKQCQLVGDDLFVTNSARLRDGIKMGAANSILIKMNQIGTLSETLDAVETAHRASYRAIISHRSGETEDSFIADLAVATNCGQIKTGSLARSDRLAKYNQLIRIEEMLGAQACYAGNWHC</sequence>
<accession>Q6G173</accession>
<gene>
    <name evidence="1" type="primary">eno</name>
    <name type="ordered locus">BQ04880</name>
</gene>
<comment type="function">
    <text evidence="1">Catalyzes the reversible conversion of 2-phosphoglycerate (2-PG) into phosphoenolpyruvate (PEP). It is essential for the degradation of carbohydrates via glycolysis.</text>
</comment>
<comment type="catalytic activity">
    <reaction evidence="1">
        <text>(2R)-2-phosphoglycerate = phosphoenolpyruvate + H2O</text>
        <dbReference type="Rhea" id="RHEA:10164"/>
        <dbReference type="ChEBI" id="CHEBI:15377"/>
        <dbReference type="ChEBI" id="CHEBI:58289"/>
        <dbReference type="ChEBI" id="CHEBI:58702"/>
        <dbReference type="EC" id="4.2.1.11"/>
    </reaction>
</comment>
<comment type="cofactor">
    <cofactor evidence="1">
        <name>Mg(2+)</name>
        <dbReference type="ChEBI" id="CHEBI:18420"/>
    </cofactor>
    <text evidence="1">Binds a second Mg(2+) ion via substrate during catalysis.</text>
</comment>
<comment type="pathway">
    <text evidence="1">Carbohydrate degradation; glycolysis; pyruvate from D-glyceraldehyde 3-phosphate: step 4/5.</text>
</comment>
<comment type="subcellular location">
    <subcellularLocation>
        <location evidence="1">Cytoplasm</location>
    </subcellularLocation>
    <subcellularLocation>
        <location evidence="1">Secreted</location>
    </subcellularLocation>
    <subcellularLocation>
        <location evidence="1">Cell surface</location>
    </subcellularLocation>
    <text evidence="1">Fractions of enolase are present in both the cytoplasm and on the cell surface.</text>
</comment>
<comment type="similarity">
    <text evidence="1">Belongs to the enolase family.</text>
</comment>
<keyword id="KW-0963">Cytoplasm</keyword>
<keyword id="KW-0324">Glycolysis</keyword>
<keyword id="KW-0456">Lyase</keyword>
<keyword id="KW-0460">Magnesium</keyword>
<keyword id="KW-0479">Metal-binding</keyword>
<keyword id="KW-0964">Secreted</keyword>
<organism>
    <name type="scientific">Bartonella quintana (strain Toulouse)</name>
    <name type="common">Rochalimaea quintana</name>
    <dbReference type="NCBI Taxonomy" id="283165"/>
    <lineage>
        <taxon>Bacteria</taxon>
        <taxon>Pseudomonadati</taxon>
        <taxon>Pseudomonadota</taxon>
        <taxon>Alphaproteobacteria</taxon>
        <taxon>Hyphomicrobiales</taxon>
        <taxon>Bartonellaceae</taxon>
        <taxon>Bartonella</taxon>
    </lineage>
</organism>
<proteinExistence type="inferred from homology"/>